<keyword id="KW-0963">Cytoplasm</keyword>
<keyword id="KW-0255">Endonuclease</keyword>
<keyword id="KW-0378">Hydrolase</keyword>
<keyword id="KW-0460">Magnesium</keyword>
<keyword id="KW-0479">Metal-binding</keyword>
<keyword id="KW-0507">mRNA processing</keyword>
<keyword id="KW-0540">Nuclease</keyword>
<keyword id="KW-0694">RNA-binding</keyword>
<keyword id="KW-0698">rRNA processing</keyword>
<keyword id="KW-0699">rRNA-binding</keyword>
<keyword id="KW-0819">tRNA processing</keyword>
<accession>A8A377</accession>
<feature type="chain" id="PRO_1000075746" description="Ribonuclease 3">
    <location>
        <begin position="1"/>
        <end position="226"/>
    </location>
</feature>
<feature type="domain" description="RNase III" evidence="1">
    <location>
        <begin position="6"/>
        <end position="128"/>
    </location>
</feature>
<feature type="domain" description="DRBM" evidence="1">
    <location>
        <begin position="155"/>
        <end position="225"/>
    </location>
</feature>
<feature type="active site" evidence="1">
    <location>
        <position position="45"/>
    </location>
</feature>
<feature type="active site" evidence="1">
    <location>
        <position position="117"/>
    </location>
</feature>
<feature type="binding site" evidence="1">
    <location>
        <position position="41"/>
    </location>
    <ligand>
        <name>Mg(2+)</name>
        <dbReference type="ChEBI" id="CHEBI:18420"/>
    </ligand>
</feature>
<feature type="binding site" evidence="1">
    <location>
        <position position="114"/>
    </location>
    <ligand>
        <name>Mg(2+)</name>
        <dbReference type="ChEBI" id="CHEBI:18420"/>
    </ligand>
</feature>
<feature type="binding site" evidence="1">
    <location>
        <position position="117"/>
    </location>
    <ligand>
        <name>Mg(2+)</name>
        <dbReference type="ChEBI" id="CHEBI:18420"/>
    </ligand>
</feature>
<sequence>MNPIVINRLQRKLGYTFNHQELLQQALTHRSASSKHNERLEFLGDSILSYVIANALYHRFPRVDEGDMSRMRATLVRGNTLAELAREFELGECLRLGPGELKSGGFRRESILADTVEALIGGVFLDSDIQTVEKLILNWYQTRLDEISPGDKQKDPKTRLQEYLQGRHLPLPTYLVVQVRGEAHDQEFTIHCQVSGLSEPVVGTGSSRRKAEQAAAEQALKKLELE</sequence>
<organism>
    <name type="scientific">Escherichia coli O9:H4 (strain HS)</name>
    <dbReference type="NCBI Taxonomy" id="331112"/>
    <lineage>
        <taxon>Bacteria</taxon>
        <taxon>Pseudomonadati</taxon>
        <taxon>Pseudomonadota</taxon>
        <taxon>Gammaproteobacteria</taxon>
        <taxon>Enterobacterales</taxon>
        <taxon>Enterobacteriaceae</taxon>
        <taxon>Escherichia</taxon>
    </lineage>
</organism>
<dbReference type="EC" id="3.1.26.3" evidence="1"/>
<dbReference type="EMBL" id="CP000802">
    <property type="protein sequence ID" value="ABV06981.1"/>
    <property type="molecule type" value="Genomic_DNA"/>
</dbReference>
<dbReference type="RefSeq" id="WP_001068343.1">
    <property type="nucleotide sequence ID" value="NC_009800.1"/>
</dbReference>
<dbReference type="SMR" id="A8A377"/>
<dbReference type="GeneID" id="93774524"/>
<dbReference type="KEGG" id="ecx:EcHS_A2722"/>
<dbReference type="HOGENOM" id="CLU_000907_1_1_6"/>
<dbReference type="GO" id="GO:0005737">
    <property type="term" value="C:cytoplasm"/>
    <property type="evidence" value="ECO:0007669"/>
    <property type="project" value="UniProtKB-SubCell"/>
</dbReference>
<dbReference type="GO" id="GO:0003725">
    <property type="term" value="F:double-stranded RNA binding"/>
    <property type="evidence" value="ECO:0007669"/>
    <property type="project" value="TreeGrafter"/>
</dbReference>
<dbReference type="GO" id="GO:0046872">
    <property type="term" value="F:metal ion binding"/>
    <property type="evidence" value="ECO:0007669"/>
    <property type="project" value="UniProtKB-KW"/>
</dbReference>
<dbReference type="GO" id="GO:0004525">
    <property type="term" value="F:ribonuclease III activity"/>
    <property type="evidence" value="ECO:0007669"/>
    <property type="project" value="UniProtKB-UniRule"/>
</dbReference>
<dbReference type="GO" id="GO:0019843">
    <property type="term" value="F:rRNA binding"/>
    <property type="evidence" value="ECO:0007669"/>
    <property type="project" value="UniProtKB-KW"/>
</dbReference>
<dbReference type="GO" id="GO:0006397">
    <property type="term" value="P:mRNA processing"/>
    <property type="evidence" value="ECO:0007669"/>
    <property type="project" value="UniProtKB-UniRule"/>
</dbReference>
<dbReference type="GO" id="GO:0010468">
    <property type="term" value="P:regulation of gene expression"/>
    <property type="evidence" value="ECO:0007669"/>
    <property type="project" value="TreeGrafter"/>
</dbReference>
<dbReference type="GO" id="GO:0006364">
    <property type="term" value="P:rRNA processing"/>
    <property type="evidence" value="ECO:0007669"/>
    <property type="project" value="UniProtKB-UniRule"/>
</dbReference>
<dbReference type="GO" id="GO:0008033">
    <property type="term" value="P:tRNA processing"/>
    <property type="evidence" value="ECO:0007669"/>
    <property type="project" value="UniProtKB-KW"/>
</dbReference>
<dbReference type="CDD" id="cd10845">
    <property type="entry name" value="DSRM_RNAse_III_family"/>
    <property type="match status" value="1"/>
</dbReference>
<dbReference type="CDD" id="cd00593">
    <property type="entry name" value="RIBOc"/>
    <property type="match status" value="1"/>
</dbReference>
<dbReference type="FunFam" id="1.10.1520.10:FF:000001">
    <property type="entry name" value="Ribonuclease 3"/>
    <property type="match status" value="1"/>
</dbReference>
<dbReference type="FunFam" id="3.30.160.20:FF:000003">
    <property type="entry name" value="Ribonuclease 3"/>
    <property type="match status" value="1"/>
</dbReference>
<dbReference type="Gene3D" id="3.30.160.20">
    <property type="match status" value="1"/>
</dbReference>
<dbReference type="Gene3D" id="1.10.1520.10">
    <property type="entry name" value="Ribonuclease III domain"/>
    <property type="match status" value="1"/>
</dbReference>
<dbReference type="HAMAP" id="MF_00104">
    <property type="entry name" value="RNase_III"/>
    <property type="match status" value="1"/>
</dbReference>
<dbReference type="InterPro" id="IPR014720">
    <property type="entry name" value="dsRBD_dom"/>
</dbReference>
<dbReference type="InterPro" id="IPR011907">
    <property type="entry name" value="RNase_III"/>
</dbReference>
<dbReference type="InterPro" id="IPR000999">
    <property type="entry name" value="RNase_III_dom"/>
</dbReference>
<dbReference type="InterPro" id="IPR036389">
    <property type="entry name" value="RNase_III_sf"/>
</dbReference>
<dbReference type="NCBIfam" id="TIGR02191">
    <property type="entry name" value="RNaseIII"/>
    <property type="match status" value="1"/>
</dbReference>
<dbReference type="PANTHER" id="PTHR11207:SF0">
    <property type="entry name" value="RIBONUCLEASE 3"/>
    <property type="match status" value="1"/>
</dbReference>
<dbReference type="PANTHER" id="PTHR11207">
    <property type="entry name" value="RIBONUCLEASE III"/>
    <property type="match status" value="1"/>
</dbReference>
<dbReference type="Pfam" id="PF00035">
    <property type="entry name" value="dsrm"/>
    <property type="match status" value="1"/>
</dbReference>
<dbReference type="Pfam" id="PF14622">
    <property type="entry name" value="Ribonucleas_3_3"/>
    <property type="match status" value="1"/>
</dbReference>
<dbReference type="SMART" id="SM00358">
    <property type="entry name" value="DSRM"/>
    <property type="match status" value="1"/>
</dbReference>
<dbReference type="SMART" id="SM00535">
    <property type="entry name" value="RIBOc"/>
    <property type="match status" value="1"/>
</dbReference>
<dbReference type="SUPFAM" id="SSF54768">
    <property type="entry name" value="dsRNA-binding domain-like"/>
    <property type="match status" value="1"/>
</dbReference>
<dbReference type="SUPFAM" id="SSF69065">
    <property type="entry name" value="RNase III domain-like"/>
    <property type="match status" value="1"/>
</dbReference>
<dbReference type="PROSITE" id="PS50137">
    <property type="entry name" value="DS_RBD"/>
    <property type="match status" value="1"/>
</dbReference>
<dbReference type="PROSITE" id="PS00517">
    <property type="entry name" value="RNASE_3_1"/>
    <property type="match status" value="1"/>
</dbReference>
<dbReference type="PROSITE" id="PS50142">
    <property type="entry name" value="RNASE_3_2"/>
    <property type="match status" value="1"/>
</dbReference>
<protein>
    <recommendedName>
        <fullName evidence="1">Ribonuclease 3</fullName>
        <ecNumber evidence="1">3.1.26.3</ecNumber>
    </recommendedName>
    <alternativeName>
        <fullName evidence="1">Ribonuclease III</fullName>
        <shortName evidence="1">RNase III</shortName>
    </alternativeName>
</protein>
<evidence type="ECO:0000255" key="1">
    <source>
        <dbReference type="HAMAP-Rule" id="MF_00104"/>
    </source>
</evidence>
<name>RNC_ECOHS</name>
<comment type="function">
    <text evidence="1">Digests double-stranded RNA. Involved in the processing of primary rRNA transcript to yield the immediate precursors to the large and small rRNAs (23S and 16S). Processes some mRNAs, and tRNAs when they are encoded in the rRNA operon. Processes pre-crRNA and tracrRNA of type II CRISPR loci if present in the organism.</text>
</comment>
<comment type="catalytic activity">
    <reaction evidence="1">
        <text>Endonucleolytic cleavage to 5'-phosphomonoester.</text>
        <dbReference type="EC" id="3.1.26.3"/>
    </reaction>
</comment>
<comment type="cofactor">
    <cofactor evidence="1">
        <name>Mg(2+)</name>
        <dbReference type="ChEBI" id="CHEBI:18420"/>
    </cofactor>
</comment>
<comment type="subunit">
    <text evidence="1">Homodimer.</text>
</comment>
<comment type="subcellular location">
    <subcellularLocation>
        <location evidence="1">Cytoplasm</location>
    </subcellularLocation>
</comment>
<comment type="similarity">
    <text evidence="1">Belongs to the ribonuclease III family.</text>
</comment>
<gene>
    <name evidence="1" type="primary">rnc</name>
    <name type="ordered locus">EcHS_A2722</name>
</gene>
<proteinExistence type="inferred from homology"/>
<reference key="1">
    <citation type="journal article" date="2008" name="J. Bacteriol.">
        <title>The pangenome structure of Escherichia coli: comparative genomic analysis of E. coli commensal and pathogenic isolates.</title>
        <authorList>
            <person name="Rasko D.A."/>
            <person name="Rosovitz M.J."/>
            <person name="Myers G.S.A."/>
            <person name="Mongodin E.F."/>
            <person name="Fricke W.F."/>
            <person name="Gajer P."/>
            <person name="Crabtree J."/>
            <person name="Sebaihia M."/>
            <person name="Thomson N.R."/>
            <person name="Chaudhuri R."/>
            <person name="Henderson I.R."/>
            <person name="Sperandio V."/>
            <person name="Ravel J."/>
        </authorList>
    </citation>
    <scope>NUCLEOTIDE SEQUENCE [LARGE SCALE GENOMIC DNA]</scope>
    <source>
        <strain>HS</strain>
    </source>
</reference>